<sequence>MACGATLKRSMEFEALMSPQSPKRRRCAPLPGSPATPSPQRCGIRPEIQQGQQQPLGGDLRLTPEQILQNIKQEYTRYQRRRQLEGAFNQGEAGVSNEVQASCSSLTAPSSPGSLVKKDQPTFSLRQVGILCERLLKDHEDKIREEYEQILNIKLAEQYESFVKFTHDQIMRRYGARPTSYVS</sequence>
<proteinExistence type="evidence at transcript level"/>
<feature type="chain" id="PRO_0000274321" description="Akirin-1B">
    <location>
        <begin position="1"/>
        <end position="183"/>
    </location>
</feature>
<feature type="region of interest" description="Disordered" evidence="4">
    <location>
        <begin position="14"/>
        <end position="43"/>
    </location>
</feature>
<feature type="short sequence motif" description="SYVS motif" evidence="1">
    <location>
        <begin position="180"/>
        <end position="183"/>
    </location>
</feature>
<protein>
    <recommendedName>
        <fullName>Akirin-1B</fullName>
    </recommendedName>
</protein>
<organism>
    <name type="scientific">Xenopus laevis</name>
    <name type="common">African clawed frog</name>
    <dbReference type="NCBI Taxonomy" id="8355"/>
    <lineage>
        <taxon>Eukaryota</taxon>
        <taxon>Metazoa</taxon>
        <taxon>Chordata</taxon>
        <taxon>Craniata</taxon>
        <taxon>Vertebrata</taxon>
        <taxon>Euteleostomi</taxon>
        <taxon>Amphibia</taxon>
        <taxon>Batrachia</taxon>
        <taxon>Anura</taxon>
        <taxon>Pipoidea</taxon>
        <taxon>Pipidae</taxon>
        <taxon>Xenopodinae</taxon>
        <taxon>Xenopus</taxon>
        <taxon>Xenopus</taxon>
    </lineage>
</organism>
<evidence type="ECO:0000250" key="1">
    <source>
        <dbReference type="UniProtKB" id="Q53H80"/>
    </source>
</evidence>
<evidence type="ECO:0000250" key="2">
    <source>
        <dbReference type="UniProtKB" id="Q99LF1"/>
    </source>
</evidence>
<evidence type="ECO:0000250" key="3">
    <source>
        <dbReference type="UniProtKB" id="Q9H9L7"/>
    </source>
</evidence>
<evidence type="ECO:0000256" key="4">
    <source>
        <dbReference type="SAM" id="MobiDB-lite"/>
    </source>
</evidence>
<evidence type="ECO:0000305" key="5"/>
<gene>
    <name type="primary">akirin1-b</name>
</gene>
<dbReference type="EMBL" id="BC043949">
    <property type="protein sequence ID" value="AAH43949.1"/>
    <property type="molecule type" value="mRNA"/>
</dbReference>
<dbReference type="RefSeq" id="NP_001079509.1">
    <property type="nucleotide sequence ID" value="NM_001086040.1"/>
</dbReference>
<dbReference type="SMR" id="Q7ZY70"/>
<dbReference type="DNASU" id="379196"/>
<dbReference type="GeneID" id="379196"/>
<dbReference type="KEGG" id="xla:379196"/>
<dbReference type="AGR" id="Xenbase:XB-GENE-17331668"/>
<dbReference type="CTD" id="379196"/>
<dbReference type="Xenbase" id="XB-GENE-17331668">
    <property type="gene designation" value="akirin1.L"/>
</dbReference>
<dbReference type="OMA" id="PMGGEHR"/>
<dbReference type="OrthoDB" id="10039914at2759"/>
<dbReference type="Proteomes" id="UP000186698">
    <property type="component" value="Chromosome 2L"/>
</dbReference>
<dbReference type="Bgee" id="379196">
    <property type="expression patterns" value="Expressed in blastula and 19 other cell types or tissues"/>
</dbReference>
<dbReference type="GO" id="GO:0000785">
    <property type="term" value="C:chromatin"/>
    <property type="evidence" value="ECO:0000318"/>
    <property type="project" value="GO_Central"/>
</dbReference>
<dbReference type="GO" id="GO:0005634">
    <property type="term" value="C:nucleus"/>
    <property type="evidence" value="ECO:0000318"/>
    <property type="project" value="GO_Central"/>
</dbReference>
<dbReference type="GO" id="GO:0003712">
    <property type="term" value="F:transcription coregulator activity"/>
    <property type="evidence" value="ECO:0000318"/>
    <property type="project" value="GO_Central"/>
</dbReference>
<dbReference type="GO" id="GO:0014839">
    <property type="term" value="P:myoblast migration involved in skeletal muscle regeneration"/>
    <property type="evidence" value="ECO:0000318"/>
    <property type="project" value="GO_Central"/>
</dbReference>
<dbReference type="GO" id="GO:1902723">
    <property type="term" value="P:negative regulation of skeletal muscle satellite cell proliferation"/>
    <property type="evidence" value="ECO:0000318"/>
    <property type="project" value="GO_Central"/>
</dbReference>
<dbReference type="GO" id="GO:0010592">
    <property type="term" value="P:positive regulation of lamellipodium assembly"/>
    <property type="evidence" value="ECO:0000318"/>
    <property type="project" value="GO_Central"/>
</dbReference>
<dbReference type="GO" id="GO:0010759">
    <property type="term" value="P:positive regulation of macrophage chemotaxis"/>
    <property type="evidence" value="ECO:0000318"/>
    <property type="project" value="GO_Central"/>
</dbReference>
<dbReference type="GO" id="GO:0045663">
    <property type="term" value="P:positive regulation of myoblast differentiation"/>
    <property type="evidence" value="ECO:0000250"/>
    <property type="project" value="UniProtKB"/>
</dbReference>
<dbReference type="GO" id="GO:0045944">
    <property type="term" value="P:positive regulation of transcription by RNA polymerase II"/>
    <property type="evidence" value="ECO:0000250"/>
    <property type="project" value="UniProtKB"/>
</dbReference>
<dbReference type="CDD" id="cd22243">
    <property type="entry name" value="akirin-1"/>
    <property type="match status" value="1"/>
</dbReference>
<dbReference type="InterPro" id="IPR024132">
    <property type="entry name" value="Akirin"/>
</dbReference>
<dbReference type="PANTHER" id="PTHR13293:SF9">
    <property type="entry name" value="AKIRIN-1"/>
    <property type="match status" value="1"/>
</dbReference>
<dbReference type="PANTHER" id="PTHR13293">
    <property type="entry name" value="AKIRIN-RELATED"/>
    <property type="match status" value="1"/>
</dbReference>
<accession>Q7ZY70</accession>
<keyword id="KW-0539">Nucleus</keyword>
<keyword id="KW-1185">Reference proteome</keyword>
<reference key="1">
    <citation type="submission" date="2003-01" db="EMBL/GenBank/DDBJ databases">
        <authorList>
            <consortium name="NIH - Xenopus Gene Collection (XGC) project"/>
        </authorList>
    </citation>
    <scope>NUCLEOTIDE SEQUENCE [LARGE SCALE MRNA]</scope>
    <source>
        <tissue>Embryo</tissue>
    </source>
</reference>
<comment type="function">
    <text evidence="2">Molecular adapter that acts as a bridge between proteins, and which is involved skeletal muscle development. Functions as a signal transducer for MSTN during skeletal muscle regeneration and myogenesis.</text>
</comment>
<comment type="subcellular location">
    <subcellularLocation>
        <location evidence="3">Nucleus</location>
    </subcellularLocation>
</comment>
<comment type="similarity">
    <text evidence="5">Belongs to the akirin family.</text>
</comment>
<name>AKIRB_XENLA</name>